<feature type="chain" id="PRO_0000053955" description="Voltage-dependent T-type calcium channel subunit alpha-1H">
    <location>
        <begin position="1"/>
        <end position="2365"/>
    </location>
</feature>
<feature type="topological domain" description="Cytoplasmic" evidence="3">
    <location>
        <begin position="1"/>
        <end position="100"/>
    </location>
</feature>
<feature type="transmembrane region" description="Helical; Name=S1 of repeat I" evidence="3">
    <location>
        <begin position="101"/>
        <end position="119"/>
    </location>
</feature>
<feature type="topological domain" description="Extracellular" evidence="3">
    <location>
        <begin position="120"/>
        <end position="141"/>
    </location>
</feature>
<feature type="transmembrane region" description="Helical; Name=S2 of repeat I" evidence="3">
    <location>
        <begin position="142"/>
        <end position="160"/>
    </location>
</feature>
<feature type="topological domain" description="Cytoplasmic" evidence="3">
    <location>
        <begin position="161"/>
        <end position="169"/>
    </location>
</feature>
<feature type="transmembrane region" description="Helical; Name=S3 of repeat I" evidence="3">
    <location>
        <begin position="170"/>
        <end position="184"/>
    </location>
</feature>
<feature type="topological domain" description="Extracellular" evidence="3">
    <location>
        <begin position="185"/>
        <end position="193"/>
    </location>
</feature>
<feature type="transmembrane region" description="Helical; Name=S4 of repeat I" evidence="3">
    <location>
        <begin position="194"/>
        <end position="212"/>
    </location>
</feature>
<feature type="topological domain" description="Cytoplasmic" evidence="3">
    <location>
        <begin position="213"/>
        <end position="232"/>
    </location>
</feature>
<feature type="transmembrane region" description="Helical; Name=S5 of repeat I" evidence="3">
    <location>
        <begin position="233"/>
        <end position="253"/>
    </location>
</feature>
<feature type="topological domain" description="Extracellular" evidence="3">
    <location>
        <begin position="254"/>
        <end position="394"/>
    </location>
</feature>
<feature type="transmembrane region" description="Helical; Name=S6 of repeat I" evidence="3">
    <location>
        <begin position="395"/>
        <end position="419"/>
    </location>
</feature>
<feature type="topological domain" description="Cytoplasmic" evidence="3">
    <location>
        <begin position="420"/>
        <end position="790"/>
    </location>
</feature>
<feature type="transmembrane region" description="Helical; Name=S1 of repeat II" evidence="3">
    <location>
        <begin position="791"/>
        <end position="811"/>
    </location>
</feature>
<feature type="topological domain" description="Extracellular" evidence="3">
    <location>
        <begin position="812"/>
        <end position="824"/>
    </location>
</feature>
<feature type="transmembrane region" description="Helical; Name=S2 of repeat II" evidence="3">
    <location>
        <begin position="825"/>
        <end position="846"/>
    </location>
</feature>
<feature type="topological domain" description="Cytoplasmic" evidence="3">
    <location>
        <begin position="847"/>
        <end position="852"/>
    </location>
</feature>
<feature type="transmembrane region" description="Helical; Name=S3 of repeat II" evidence="3">
    <location>
        <begin position="853"/>
        <end position="871"/>
    </location>
</feature>
<feature type="topological domain" description="Extracellular" evidence="3">
    <location>
        <begin position="872"/>
        <end position="879"/>
    </location>
</feature>
<feature type="transmembrane region" description="Helical; Name=S4 of repeat II" evidence="3">
    <location>
        <begin position="880"/>
        <end position="903"/>
    </location>
</feature>
<feature type="topological domain" description="Cytoplasmic" evidence="3">
    <location>
        <begin position="904"/>
        <end position="914"/>
    </location>
</feature>
<feature type="transmembrane region" description="Helical; Name=S5 of repeat II" evidence="3">
    <location>
        <begin position="915"/>
        <end position="935"/>
    </location>
</feature>
<feature type="topological domain" description="Extracellular" evidence="3">
    <location>
        <begin position="936"/>
        <end position="987"/>
    </location>
</feature>
<feature type="transmembrane region" description="Helical; Name=S6 of repeat II" evidence="3">
    <location>
        <begin position="988"/>
        <end position="1012"/>
    </location>
</feature>
<feature type="topological domain" description="Cytoplasmic" evidence="3">
    <location>
        <begin position="1013"/>
        <end position="1301"/>
    </location>
</feature>
<feature type="transmembrane region" description="Helical; Name=S1 of repeat III" evidence="3">
    <location>
        <begin position="1302"/>
        <end position="1324"/>
    </location>
</feature>
<feature type="topological domain" description="Extracellular" evidence="3">
    <location>
        <begin position="1325"/>
        <end position="1342"/>
    </location>
</feature>
<feature type="transmembrane region" description="Helical; Name=S2 of repeat III" evidence="3">
    <location>
        <begin position="1343"/>
        <end position="1363"/>
    </location>
</feature>
<feature type="topological domain" description="Cytoplasmic" evidence="3">
    <location>
        <begin position="1364"/>
        <end position="1373"/>
    </location>
</feature>
<feature type="transmembrane region" description="Helical; Name=S3 of repeat III" evidence="3">
    <location>
        <begin position="1374"/>
        <end position="1393"/>
    </location>
</feature>
<feature type="topological domain" description="Extracellular" evidence="3">
    <location>
        <begin position="1394"/>
        <end position="1407"/>
    </location>
</feature>
<feature type="transmembrane region" description="Helical; Name=S4 of repeat III" evidence="3">
    <location>
        <begin position="1408"/>
        <end position="1429"/>
    </location>
</feature>
<feature type="topological domain" description="Cytoplasmic" evidence="3">
    <location>
        <begin position="1430"/>
        <end position="1439"/>
    </location>
</feature>
<feature type="transmembrane region" description="Helical; Name=S5 of repeat III" evidence="3">
    <location>
        <begin position="1440"/>
        <end position="1463"/>
    </location>
</feature>
<feature type="topological domain" description="Extracellular" evidence="3">
    <location>
        <begin position="1464"/>
        <end position="1540"/>
    </location>
</feature>
<feature type="transmembrane region" description="Helical; Name=S6 of repeat III" evidence="3">
    <location>
        <begin position="1541"/>
        <end position="1566"/>
    </location>
</feature>
<feature type="topological domain" description="Cytoplasmic" evidence="3">
    <location>
        <begin position="1567"/>
        <end position="1627"/>
    </location>
</feature>
<feature type="transmembrane region" description="Helical; Name=S1 of repeat IV" evidence="3">
    <location>
        <begin position="1628"/>
        <end position="1648"/>
    </location>
</feature>
<feature type="topological domain" description="Extracellular" evidence="3">
    <location>
        <begin position="1649"/>
        <end position="1662"/>
    </location>
</feature>
<feature type="transmembrane region" description="Helical; Name=S2 of repeat IV" evidence="3">
    <location>
        <begin position="1663"/>
        <end position="1684"/>
    </location>
</feature>
<feature type="topological domain" description="Cytoplasmic" evidence="3">
    <location>
        <begin position="1685"/>
        <end position="1691"/>
    </location>
</feature>
<feature type="transmembrane region" description="Helical; Name=S3 of repeat IV" evidence="3">
    <location>
        <begin position="1692"/>
        <end position="1710"/>
    </location>
</feature>
<feature type="topological domain" description="Extracellular" evidence="3">
    <location>
        <begin position="1711"/>
        <end position="1724"/>
    </location>
</feature>
<feature type="transmembrane region" description="Helical; Name=S4 of repeat IV" evidence="3">
    <location>
        <begin position="1725"/>
        <end position="1748"/>
    </location>
</feature>
<feature type="topological domain" description="Cytoplasmic" evidence="3">
    <location>
        <begin position="1749"/>
        <end position="1762"/>
    </location>
</feature>
<feature type="transmembrane region" description="Helical; Name=S5 of repeat IV" evidence="3">
    <location>
        <begin position="1763"/>
        <end position="1783"/>
    </location>
</feature>
<feature type="topological domain" description="Extracellular" evidence="3">
    <location>
        <begin position="1784"/>
        <end position="1846"/>
    </location>
</feature>
<feature type="transmembrane region" description="Helical; Name=S6 of repeat IV" evidence="3">
    <location>
        <begin position="1847"/>
        <end position="1874"/>
    </location>
</feature>
<feature type="topological domain" description="Cytoplasmic" evidence="3">
    <location>
        <begin position="1875"/>
        <end position="2365"/>
    </location>
</feature>
<feature type="repeat" description="I">
    <location>
        <begin position="87"/>
        <end position="422"/>
    </location>
</feature>
<feature type="repeat" description="II">
    <location>
        <begin position="776"/>
        <end position="1015"/>
    </location>
</feature>
<feature type="repeat" description="III">
    <location>
        <begin position="1292"/>
        <end position="1569"/>
    </location>
</feature>
<feature type="repeat" description="IV">
    <location>
        <begin position="1613"/>
        <end position="1874"/>
    </location>
</feature>
<feature type="region of interest" description="Disordered" evidence="4">
    <location>
        <begin position="1"/>
        <end position="63"/>
    </location>
</feature>
<feature type="region of interest" description="Disordered" evidence="4">
    <location>
        <begin position="490"/>
        <end position="573"/>
    </location>
</feature>
<feature type="region of interest" description="Disordered" evidence="4">
    <location>
        <begin position="618"/>
        <end position="656"/>
    </location>
</feature>
<feature type="region of interest" description="Disordered" evidence="4">
    <location>
        <begin position="737"/>
        <end position="761"/>
    </location>
</feature>
<feature type="region of interest" description="Disordered" evidence="4">
    <location>
        <begin position="1059"/>
        <end position="1215"/>
    </location>
</feature>
<feature type="region of interest" description="Disordered" evidence="4">
    <location>
        <begin position="1897"/>
        <end position="1920"/>
    </location>
</feature>
<feature type="region of interest" description="Disordered" evidence="4">
    <location>
        <begin position="1967"/>
        <end position="1999"/>
    </location>
</feature>
<feature type="region of interest" description="Disordered" evidence="4">
    <location>
        <begin position="2053"/>
        <end position="2264"/>
    </location>
</feature>
<feature type="region of interest" description="Disordered" evidence="4">
    <location>
        <begin position="2321"/>
        <end position="2365"/>
    </location>
</feature>
<feature type="compositionally biased region" description="Low complexity" evidence="4">
    <location>
        <begin position="16"/>
        <end position="36"/>
    </location>
</feature>
<feature type="compositionally biased region" description="Basic residues" evidence="4">
    <location>
        <begin position="500"/>
        <end position="532"/>
    </location>
</feature>
<feature type="compositionally biased region" description="Pro residues" evidence="4">
    <location>
        <begin position="557"/>
        <end position="566"/>
    </location>
</feature>
<feature type="compositionally biased region" description="Polar residues" evidence="4">
    <location>
        <begin position="621"/>
        <end position="631"/>
    </location>
</feature>
<feature type="compositionally biased region" description="Low complexity" evidence="4">
    <location>
        <begin position="1130"/>
        <end position="1147"/>
    </location>
</feature>
<feature type="compositionally biased region" description="Basic and acidic residues" evidence="4">
    <location>
        <begin position="1199"/>
        <end position="1209"/>
    </location>
</feature>
<feature type="compositionally biased region" description="Polar residues" evidence="4">
    <location>
        <begin position="1897"/>
        <end position="1916"/>
    </location>
</feature>
<feature type="compositionally biased region" description="Polar residues" evidence="4">
    <location>
        <begin position="1967"/>
        <end position="1983"/>
    </location>
</feature>
<feature type="compositionally biased region" description="Acidic residues" evidence="4">
    <location>
        <begin position="2092"/>
        <end position="2102"/>
    </location>
</feature>
<feature type="compositionally biased region" description="Basic and acidic residues" evidence="4">
    <location>
        <begin position="2172"/>
        <end position="2187"/>
    </location>
</feature>
<feature type="binding site" evidence="1">
    <location>
        <position position="140"/>
    </location>
    <ligand>
        <name>Zn(2+)</name>
        <dbReference type="ChEBI" id="CHEBI:29105"/>
    </ligand>
</feature>
<feature type="binding site" evidence="1">
    <location>
        <position position="189"/>
    </location>
    <ligand>
        <name>Zn(2+)</name>
        <dbReference type="ChEBI" id="CHEBI:29105"/>
    </ligand>
</feature>
<feature type="binding site" evidence="1">
    <location>
        <position position="191"/>
    </location>
    <ligand>
        <name>Zn(2+)</name>
        <dbReference type="ChEBI" id="CHEBI:29105"/>
    </ligand>
</feature>
<feature type="site" description="Calcium ion selectivity and permeability" evidence="1">
    <location>
        <position position="378"/>
    </location>
</feature>
<feature type="site" description="Calcium ion selectivity and permeability" evidence="1">
    <location>
        <position position="971"/>
    </location>
</feature>
<feature type="site" description="Calcium ion selectivity and permeability" evidence="1">
    <location>
        <position position="1515"/>
    </location>
</feature>
<feature type="site" description="Calcium ion selectivity and permeability" evidence="1">
    <location>
        <position position="1819"/>
    </location>
</feature>
<feature type="glycosylation site" description="N-linked (GlcNAc...) asparagine" evidence="3">
    <location>
        <position position="192"/>
    </location>
</feature>
<feature type="glycosylation site" description="N-linked (GlcNAc...) asparagine" evidence="3">
    <location>
        <position position="271"/>
    </location>
</feature>
<feature type="glycosylation site" description="N-linked (GlcNAc...) asparagine" evidence="3">
    <location>
        <position position="1477"/>
    </location>
</feature>
<feature type="splice variant" id="VSP_013675" description="In isoform 2." evidence="7 8">
    <original>STFPNPE</original>
    <variation>K</variation>
    <location>
        <begin position="1598"/>
        <end position="1604"/>
    </location>
</feature>
<feature type="sequence conflict" description="In Ref. 1; AAK21607 and 3; AAI38027." evidence="9" ref="1 3">
    <original>SRR</original>
    <variation>CNP</variation>
    <location>
        <begin position="98"/>
        <end position="100"/>
    </location>
</feature>
<feature type="sequence conflict" description="In Ref. 1; AAK21607 and 3; AAI38027." evidence="9" ref="1 3">
    <original>I</original>
    <variation>V</variation>
    <location>
        <position position="863"/>
    </location>
</feature>
<feature type="sequence conflict" description="In Ref. 1; AAK21607, 3; AAI38027 and 4; BAC65734." evidence="9" ref="1 3 4">
    <original>Q</original>
    <variation>R</variation>
    <location>
        <position position="1046"/>
    </location>
</feature>
<feature type="sequence conflict" description="In Ref. 5; AAC67240." evidence="9" ref="5">
    <original>GIM</original>
    <variation>ARG</variation>
    <location>
        <begin position="1823"/>
        <end position="1825"/>
    </location>
</feature>
<feature type="sequence conflict" description="In Ref. 1; AAK21607, 3; AAI38027 and 4; BAC65734." evidence="9" ref="1 3 4">
    <original>E</original>
    <variation>D</variation>
    <location>
        <position position="1914"/>
    </location>
</feature>
<feature type="sequence conflict" description="In Ref. 5; AAC67240." evidence="9" ref="5">
    <original>APA</original>
    <variation>LLQ</variation>
    <location>
        <begin position="1945"/>
        <end position="1947"/>
    </location>
</feature>
<feature type="sequence conflict" description="In Ref. 5; AAC67240." evidence="9" ref="5">
    <original>S</original>
    <variation>A</variation>
    <location>
        <position position="1952"/>
    </location>
</feature>
<feature type="sequence conflict" description="In Ref. 5; AAC67240." evidence="9" ref="5">
    <location>
        <begin position="1953"/>
        <end position="2351"/>
    </location>
</feature>
<feature type="sequence conflict" description="In Ref. 1; AAK21607, 3; AAI38027 and 4; BAC65734." evidence="9" ref="1 3 4">
    <original>V</original>
    <variation>A</variation>
    <location>
        <position position="1993"/>
    </location>
</feature>
<feature type="sequence conflict" description="In Ref. 1; AAK21607, 3; AAI38027 and 4; BAC65734." evidence="9" ref="1 3 4">
    <original>C</original>
    <variation>Y</variation>
    <location>
        <position position="2016"/>
    </location>
</feature>
<feature type="sequence conflict" description="In Ref. 1; AAK21607, 3; AAI38027 and 4; BAC65734." evidence="9" ref="1 3 4">
    <original>S</original>
    <variation>G</variation>
    <location>
        <position position="2037"/>
    </location>
</feature>
<sequence length="2365" mass="262030">MTEGTLAADEVRVPLGASPSAPAAPVRASPASPGVPGREEQRGSGSSVLAPESPGTECGADLGADEEQPVPYPALAATVFFCLGQTTRPRSWCLRLVSRRWFEHISMLVIMLNCVTLGMFRPCEDVECRSERCSILEAFDDFIFAFFAVEMVIKMVALGLFGQKCYLGDTWNRLDFFIVMAGMMEYSLDGHNVSLSAIRTVRVLRPLRAINRVPSMRILVTLLLDTLPMLGNVLLLCFFVFFIFGIVGVQLWAGLLRNRCFLDSAFVRNNNLTFLRPYYQTEEGEENPFICSSRRDNGMQKCSHIPSRRELRVQCTLGWEAYGQPQAEDGGAGRNACINWNQYYNVCRSGEFNPHNGAINFDNIGYAWIAIFQVITLEGWVDIMYYVMDAHSFYNFIYFILLIIVGSFFMINLCLVVIATQFSETKQRENQLMREQRARYLSNDSTLASFSEPGSCYEELLKYVGHIFRKVKRRSLRLYARWQSRWRKKVDPSSTLHGQGPRRRPRRAGRRTASVHHLVYHHHHHHHHHYHFSHGGPRRPSPEPGAGDTRLVRACVPPSPPSPGHGPPDSESVHSIYHADCHVEGPQERARVAHTIATAASLKLASGLGTMNYPTILPSGAVNSKGSTSSRPKGLRSAGTPGATAHSPLSLGSPSPYEKIQHVVGEQGLGRASSHLSGLSVPCPLPSPQAGTLTCELKSCPYCASALEDPEFEFSGSESGDSDAHGVYEFTQDVRHGDCRDPVQQPHEGGTPGHGNERWRPPLRTASQPGGLGRLWASFSSKLRRIVDSKYFNRGIMAAILVNTLSMGVEYHEQPDELTNALEISNIVFTSMFALEMLLKLLACGPLGYIRNPYNIFDGIVVIISVWEIVGQADGGLSVLRTFRLLRVLKLVRFLPALRRQLVVLMRTMDNVATFCMLLMLFIFIFSILGMHLFGCKFSLKTDSGDTVPDRKNFDSLLWAIVTVFQILTQEDWNVVLYNGMASTSSWAALYFVALMTFGNYVLFNLLVAILVEGFQAEGDATRSDTDEDKTSTHLEEDFDKLRDVQATEMKMYSLAVTPNGHLEGRGSLPPPLITHTAATPMPTPKSSPHLDMAHTLLDSRRSSSGSVDPQLGDQKSLASLRSSPCAPWGPNSAGSSRRSSWNSLGRAPSLKRRSQCGERESLLSGEGKGSTDDEAEDSRPNSGTHPGASPGPRATPLRRAESLGHRSTMDLCPPRPATLLPTKFRDCNGQMVALPSEFFLRIDSHKEDAAEFDDDIEDSCCFRLHKVLEPYAPQWCSSRESWALYLFPPQNRLRVSCQKVIAHKMFDHVVLVFIFLNCITIALERPDIDPGSTERAFLSVSNYIFTAIFVVEMMVKVVALGLLWGEHAYLQSSWNVLDGLLVLVSLVDIIVAVASAGGAKILGVLRVLRLLRTLRPLRVISRAPGLKLVVETLISSLRPIGNIVLICCAFFIIFGILGVQLFKGKFYYCEGTDTRNITTKAECHAAHYRWVRRKYNFDNLGQALMSLFVLSSKDGWVNIMYDGLDAVGIDQQPVQNHNPWMLLYFISFLLIVSFFVLNMFVGVVVENFHKCRQHQEAEEARRREEKRLRRLERRRRSTFPNPEAQRRPYYADYSHTRRSIHSLCTSHYLDLFITFIICLNVITMSMEHYNQPKSLDEALKYCNYVFTIVFVFEAALKLVAFGFRRFFKDRWNQLDLAIVLLSIMGIALEEIEMNAALPINPTIIRIMRVLRIARVLKLLKMATGMRALLDTVVQALPQVGNLGLLFMLLFFIYAALGVELFGRLECSEDNPCEGLSRHATFTNFGMAFLTLFRVSTGDNWNGIMKDTLRECTREDKHCLSYLPALSPVYFVTFVLVAQFVLVNVVVAVLMKHLEESNKEAREDAEMDAEIELEIAQGSTAQPPSTAQESQGTEPDTPNLLVVRKVSVSRMLSLPNDSYMFRPVAPAAAPHSHPLQEVEMETYTGPVTSAHSPSLEPRTSFQVPSAASSPARVSDPLCALSPRDTPRSLSLSRILCRQEAMHAESLEGQIDDAGEDSIPDYTEPAENISMSQAPLGTLRSPPCSPRPASVRTRKHTFGQHCISSRPPTLGGDDAEAADPADEEVSHITSSAHPWPATEPHSPEASPTASPAKGTVGSGRDPHRFCSVDAQSFLDKPGRPDAQRWSSVELDNGDGHLESGEVRARASELEPALGARRKKKMSPPCISIDPPTEDEGSSRPPAAEGGNTTLRRRTPSCEAALHRDCPESTEGPGTGGDPVAKGERWGQASCRAEHLTVPNFAFEPLDMGGPGGDCFLDSDQSVTPEPRVSSLGAIVPLILETELSMPSGDPPEKEQGLYLTVPQTPLKKPGSPPATPAPDDSGDEPV</sequence>
<keyword id="KW-0025">Alternative splicing</keyword>
<keyword id="KW-0106">Calcium</keyword>
<keyword id="KW-0107">Calcium channel</keyword>
<keyword id="KW-0109">Calcium transport</keyword>
<keyword id="KW-1003">Cell membrane</keyword>
<keyword id="KW-0325">Glycoprotein</keyword>
<keyword id="KW-0407">Ion channel</keyword>
<keyword id="KW-0406">Ion transport</keyword>
<keyword id="KW-0472">Membrane</keyword>
<keyword id="KW-0479">Metal-binding</keyword>
<keyword id="KW-1185">Reference proteome</keyword>
<keyword id="KW-0677">Repeat</keyword>
<keyword id="KW-0812">Transmembrane</keyword>
<keyword id="KW-1133">Transmembrane helix</keyword>
<keyword id="KW-0813">Transport</keyword>
<keyword id="KW-0851">Voltage-gated channel</keyword>
<keyword id="KW-0862">Zinc</keyword>
<organism>
    <name type="scientific">Mus musculus</name>
    <name type="common">Mouse</name>
    <dbReference type="NCBI Taxonomy" id="10090"/>
    <lineage>
        <taxon>Eukaryota</taxon>
        <taxon>Metazoa</taxon>
        <taxon>Chordata</taxon>
        <taxon>Craniata</taxon>
        <taxon>Vertebrata</taxon>
        <taxon>Euteleostomi</taxon>
        <taxon>Mammalia</taxon>
        <taxon>Eutheria</taxon>
        <taxon>Euarchontoglires</taxon>
        <taxon>Glires</taxon>
        <taxon>Rodentia</taxon>
        <taxon>Myomorpha</taxon>
        <taxon>Muroidea</taxon>
        <taxon>Muridae</taxon>
        <taxon>Murinae</taxon>
        <taxon>Mus</taxon>
        <taxon>Mus</taxon>
    </lineage>
</organism>
<protein>
    <recommendedName>
        <fullName>Voltage-dependent T-type calcium channel subunit alpha-1H</fullName>
    </recommendedName>
    <alternativeName>
        <fullName>Voltage-gated calcium channel subunit alpha Cav3.2</fullName>
    </alternativeName>
</protein>
<proteinExistence type="evidence at protein level"/>
<reference key="1">
    <citation type="submission" date="2001-02" db="EMBL/GenBank/DDBJ databases">
        <title>Exon organization of mouse Cacna1h.</title>
        <authorList>
            <person name="Mittman S."/>
        </authorList>
    </citation>
    <scope>NUCLEOTIDE SEQUENCE [GENOMIC DNA]</scope>
    <source>
        <strain>BALB/cJ</strain>
    </source>
</reference>
<reference key="2">
    <citation type="journal article" date="2009" name="PLoS Biol.">
        <title>Lineage-specific biology revealed by a finished genome assembly of the mouse.</title>
        <authorList>
            <person name="Church D.M."/>
            <person name="Goodstadt L."/>
            <person name="Hillier L.W."/>
            <person name="Zody M.C."/>
            <person name="Goldstein S."/>
            <person name="She X."/>
            <person name="Bult C.J."/>
            <person name="Agarwala R."/>
            <person name="Cherry J.L."/>
            <person name="DiCuccio M."/>
            <person name="Hlavina W."/>
            <person name="Kapustin Y."/>
            <person name="Meric P."/>
            <person name="Maglott D."/>
            <person name="Birtle Z."/>
            <person name="Marques A.C."/>
            <person name="Graves T."/>
            <person name="Zhou S."/>
            <person name="Teague B."/>
            <person name="Potamousis K."/>
            <person name="Churas C."/>
            <person name="Place M."/>
            <person name="Herschleb J."/>
            <person name="Runnheim R."/>
            <person name="Forrest D."/>
            <person name="Amos-Landgraf J."/>
            <person name="Schwartz D.C."/>
            <person name="Cheng Z."/>
            <person name="Lindblad-Toh K."/>
            <person name="Eichler E.E."/>
            <person name="Ponting C.P."/>
        </authorList>
    </citation>
    <scope>NUCLEOTIDE SEQUENCE [LARGE SCALE GENOMIC DNA]</scope>
    <source>
        <strain>C57BL/6J</strain>
    </source>
</reference>
<reference key="3">
    <citation type="journal article" date="2004" name="Genome Res.">
        <title>The status, quality, and expansion of the NIH full-length cDNA project: the Mammalian Gene Collection (MGC).</title>
        <authorList>
            <consortium name="The MGC Project Team"/>
        </authorList>
    </citation>
    <scope>NUCLEOTIDE SEQUENCE [LARGE SCALE MRNA] (ISOFORM 2)</scope>
    <source>
        <tissue>Brain</tissue>
    </source>
</reference>
<reference key="4">
    <citation type="journal article" date="2003" name="DNA Res.">
        <title>Prediction of the coding sequences of mouse homologues of KIAA gene: II. The complete nucleotide sequences of 400 mouse KIAA-homologous cDNAs identified by screening of terminal sequences of cDNA clones randomly sampled from size-fractionated libraries.</title>
        <authorList>
            <person name="Okazaki N."/>
            <person name="Kikuno R."/>
            <person name="Ohara R."/>
            <person name="Inamoto S."/>
            <person name="Aizawa H."/>
            <person name="Yuasa S."/>
            <person name="Nakajima D."/>
            <person name="Nagase T."/>
            <person name="Ohara O."/>
            <person name="Koga H."/>
        </authorList>
    </citation>
    <scope>NUCLEOTIDE SEQUENCE [LARGE SCALE MRNA] OF 900-2365 (ISOFORM 2)</scope>
    <source>
        <tissue>Brain</tissue>
    </source>
</reference>
<reference key="5">
    <citation type="journal article" date="1998" name="Circ. Res.">
        <title>Cloning and characterization of alpha1H from human heart, a member of the T-type Ca2+ channel gene family.</title>
        <authorList>
            <person name="Cribbs L.L."/>
            <person name="Lee J.-H."/>
            <person name="Yang J."/>
            <person name="Satin J."/>
            <person name="Zhang Y."/>
            <person name="Daud A.N."/>
            <person name="Barclay J."/>
            <person name="Wiliamson M.P."/>
            <person name="Fox M."/>
            <person name="Rees M."/>
            <person name="Perez-Reyes E."/>
        </authorList>
    </citation>
    <scope>NUCLEOTIDE SEQUENCE [MRNA] OF 1823-2365</scope>
    <source>
        <strain>C57BL/6J</strain>
    </source>
</reference>
<reference key="6">
    <citation type="journal article" date="2010" name="Cell">
        <title>A tissue-specific atlas of mouse protein phosphorylation and expression.</title>
        <authorList>
            <person name="Huttlin E.L."/>
            <person name="Jedrychowski M.P."/>
            <person name="Elias J.E."/>
            <person name="Goswami T."/>
            <person name="Rad R."/>
            <person name="Beausoleil S.A."/>
            <person name="Villen J."/>
            <person name="Haas W."/>
            <person name="Sowa M.E."/>
            <person name="Gygi S.P."/>
        </authorList>
    </citation>
    <scope>IDENTIFICATION BY MASS SPECTROMETRY [LARGE SCALE ANALYSIS]</scope>
    <source>
        <tissue>Testis</tissue>
    </source>
</reference>
<reference key="7">
    <citation type="journal article" date="2016" name="Channels">
        <title>A Cav3.2/Stac1 molecular complex controls T-type channel expression at the plasma membrane.</title>
        <authorList>
            <person name="Rzhepetskyy Y."/>
            <person name="Lazniewska J."/>
            <person name="Proft J."/>
            <person name="Campiglio M."/>
            <person name="Flucher B.E."/>
            <person name="Weiss N."/>
        </authorList>
    </citation>
    <scope>INTERACTION WITH STAC</scope>
</reference>
<reference key="8">
    <citation type="journal article" date="2021" name="Pain">
        <title>A spider-venom peptide with multi-target activity on sodium and calcium channels alleviates chronic visceral pain in a model of irritable bowel syndrome.</title>
        <authorList>
            <person name="Cardoso F.C."/>
            <person name="Castro J."/>
            <person name="Grundy L."/>
            <person name="Schober G."/>
            <person name="Garcia-Caraballo S."/>
            <person name="Zhao T."/>
            <person name="Herzig V."/>
            <person name="King G.F."/>
            <person name="Brierley S.M."/>
            <person name="Lewis R.J."/>
        </authorList>
    </citation>
    <scope>TISSUE SPECIFICITY</scope>
</reference>
<accession>O88427</accession>
<accession>B2RQQ0</accession>
<accession>E9QNT0</accession>
<accession>Q80TJ2</accession>
<accession>Q9JKU5</accession>
<name>CAC1H_MOUSE</name>
<evidence type="ECO:0000250" key="1"/>
<evidence type="ECO:0000250" key="2">
    <source>
        <dbReference type="UniProtKB" id="O95180"/>
    </source>
</evidence>
<evidence type="ECO:0000255" key="3"/>
<evidence type="ECO:0000256" key="4">
    <source>
        <dbReference type="SAM" id="MobiDB-lite"/>
    </source>
</evidence>
<evidence type="ECO:0000269" key="5">
    <source>
    </source>
</evidence>
<evidence type="ECO:0000269" key="6">
    <source>
    </source>
</evidence>
<evidence type="ECO:0000303" key="7">
    <source>
    </source>
</evidence>
<evidence type="ECO:0000303" key="8">
    <source>
    </source>
</evidence>
<evidence type="ECO:0000305" key="9"/>
<comment type="function">
    <text evidence="2">Voltage-sensitive calcium channel that gives rise to T-type calcium currents. T-type calcium channels belong to the 'low-voltage activated (LVA)' group. A particularity of this type of channel is an opening at quite negative potentials, and a voltage-dependent inactivation. T-type channels serve pacemaking functions in both central neurons and cardiac nodal cells and support calcium signaling in secretory cells and vascular smooth muscle. They may also be involved in the modulation of firing patterns of neurons. In the adrenal zona glomerulosa, participates in the signaling pathway leading to aldosterone production in response to either AGT/angiotensin II, or hyperkalemia.</text>
</comment>
<comment type="catalytic activity">
    <reaction evidence="2">
        <text>Ca(2+)(in) = Ca(2+)(out)</text>
        <dbReference type="Rhea" id="RHEA:29671"/>
        <dbReference type="ChEBI" id="CHEBI:29108"/>
    </reaction>
</comment>
<comment type="subunit">
    <text evidence="5">Interacts (via N-terminal cytoplasmic domain) with STAC.</text>
</comment>
<comment type="subcellular location">
    <subcellularLocation>
        <location evidence="2">Cell membrane</location>
        <topology evidence="2">Multi-pass membrane protein</topology>
    </subcellularLocation>
    <text evidence="2">Interaction with STAC increases expression at the cell membrane.</text>
</comment>
<comment type="alternative products">
    <event type="alternative splicing"/>
    <isoform>
        <id>O88427-1</id>
        <name>1</name>
        <sequence type="displayed"/>
    </isoform>
    <isoform>
        <id>O88427-2</id>
        <name>2</name>
        <sequence type="described" ref="VSP_013675"/>
    </isoform>
</comment>
<comment type="tissue specificity">
    <text evidence="6">Is highly expressed in lumbosacral and thoracolumbar dorsal root ganglion neurons.</text>
</comment>
<comment type="domain">
    <text>Each of the four internal repeats contains five hydrophobic transmembrane segments (S1, S2, S3, S5, S6) and one positively charged transmembrane segment (S4). S4 segments probably represent the voltage-sensor and are characterized by a series of positively charged amino acids at every third position.</text>
</comment>
<comment type="PTM">
    <text>In response to raising of intracellular calcium, the T-type channels are activated by CaM-kinase II.</text>
</comment>
<comment type="similarity">
    <text evidence="9">Belongs to the calcium channel alpha-1 subunit (TC 1.A.1.11) family. CACNA1H subfamily.</text>
</comment>
<gene>
    <name type="primary">Cacna1h</name>
    <name type="synonym">Kiaa1120</name>
</gene>
<dbReference type="EMBL" id="AF226868">
    <property type="protein sequence ID" value="AAK21607.2"/>
    <property type="molecule type" value="Genomic_DNA"/>
</dbReference>
<dbReference type="EMBL" id="AY026385">
    <property type="protein sequence ID" value="AAK21607.2"/>
    <property type="status" value="JOINED"/>
    <property type="molecule type" value="Genomic_DNA"/>
</dbReference>
<dbReference type="EMBL" id="AC122454">
    <property type="status" value="NOT_ANNOTATED_CDS"/>
    <property type="molecule type" value="Genomic_DNA"/>
</dbReference>
<dbReference type="EMBL" id="AC131323">
    <property type="status" value="NOT_ANNOTATED_CDS"/>
    <property type="molecule type" value="Genomic_DNA"/>
</dbReference>
<dbReference type="EMBL" id="BC138026">
    <property type="protein sequence ID" value="AAI38027.1"/>
    <property type="molecule type" value="mRNA"/>
</dbReference>
<dbReference type="EMBL" id="AK122452">
    <property type="protein sequence ID" value="BAC65734.1"/>
    <property type="molecule type" value="mRNA"/>
</dbReference>
<dbReference type="EMBL" id="AF051947">
    <property type="protein sequence ID" value="AAC67240.1"/>
    <property type="molecule type" value="mRNA"/>
</dbReference>
<dbReference type="CCDS" id="CCDS37501.1">
    <molecule id="O88427-2"/>
</dbReference>
<dbReference type="SMR" id="O88427"/>
<dbReference type="FunCoup" id="O88427">
    <property type="interactions" value="122"/>
</dbReference>
<dbReference type="IntAct" id="O88427">
    <property type="interactions" value="1"/>
</dbReference>
<dbReference type="STRING" id="10090.ENSMUSP00000077586"/>
<dbReference type="BindingDB" id="O88427"/>
<dbReference type="ChEMBL" id="CHEMBL3600280"/>
<dbReference type="GlyCosmos" id="O88427">
    <property type="glycosylation" value="3 sites, No reported glycans"/>
</dbReference>
<dbReference type="GlyGen" id="O88427">
    <property type="glycosylation" value="8 sites, 2 N-linked glycans (2 sites)"/>
</dbReference>
<dbReference type="iPTMnet" id="O88427"/>
<dbReference type="PhosphoSitePlus" id="O88427"/>
<dbReference type="SwissPalm" id="O88427"/>
<dbReference type="jPOST" id="O88427"/>
<dbReference type="PaxDb" id="10090-ENSMUSP00000125541"/>
<dbReference type="ProteomicsDB" id="273886">
    <molecule id="O88427-1"/>
</dbReference>
<dbReference type="ProteomicsDB" id="273887">
    <molecule id="O88427-2"/>
</dbReference>
<dbReference type="ABCD" id="O88427">
    <property type="antibodies" value="1 sequenced antibody"/>
</dbReference>
<dbReference type="AGR" id="MGI:1928842"/>
<dbReference type="MGI" id="MGI:1928842">
    <property type="gene designation" value="Cacna1h"/>
</dbReference>
<dbReference type="eggNOG" id="KOG2302">
    <property type="taxonomic scope" value="Eukaryota"/>
</dbReference>
<dbReference type="InParanoid" id="O88427"/>
<dbReference type="ChiTaRS" id="Cacna1h">
    <property type="organism name" value="mouse"/>
</dbReference>
<dbReference type="PRO" id="PR:O88427"/>
<dbReference type="Proteomes" id="UP000000589">
    <property type="component" value="Unplaced"/>
</dbReference>
<dbReference type="RNAct" id="O88427">
    <property type="molecule type" value="protein"/>
</dbReference>
<dbReference type="GO" id="GO:0005901">
    <property type="term" value="C:caveola"/>
    <property type="evidence" value="ECO:0000314"/>
    <property type="project" value="BHF-UCL"/>
</dbReference>
<dbReference type="GO" id="GO:0098978">
    <property type="term" value="C:glutamatergic synapse"/>
    <property type="evidence" value="ECO:0000314"/>
    <property type="project" value="SynGO"/>
</dbReference>
<dbReference type="GO" id="GO:0005886">
    <property type="term" value="C:plasma membrane"/>
    <property type="evidence" value="ECO:0000250"/>
    <property type="project" value="UniProtKB"/>
</dbReference>
<dbReference type="GO" id="GO:0045211">
    <property type="term" value="C:postsynaptic membrane"/>
    <property type="evidence" value="ECO:0000314"/>
    <property type="project" value="SynGO"/>
</dbReference>
<dbReference type="GO" id="GO:0048787">
    <property type="term" value="C:presynaptic active zone membrane"/>
    <property type="evidence" value="ECO:0000314"/>
    <property type="project" value="SynGO"/>
</dbReference>
<dbReference type="GO" id="GO:0042383">
    <property type="term" value="C:sarcolemma"/>
    <property type="evidence" value="ECO:0000314"/>
    <property type="project" value="BHF-UCL"/>
</dbReference>
<dbReference type="GO" id="GO:0005891">
    <property type="term" value="C:voltage-gated calcium channel complex"/>
    <property type="evidence" value="ECO:0000250"/>
    <property type="project" value="MGI"/>
</dbReference>
<dbReference type="GO" id="GO:0008332">
    <property type="term" value="F:low voltage-gated calcium channel activity"/>
    <property type="evidence" value="ECO:0000250"/>
    <property type="project" value="MGI"/>
</dbReference>
<dbReference type="GO" id="GO:0046872">
    <property type="term" value="F:metal ion binding"/>
    <property type="evidence" value="ECO:0007669"/>
    <property type="project" value="UniProtKB-KW"/>
</dbReference>
<dbReference type="GO" id="GO:0005245">
    <property type="term" value="F:voltage-gated calcium channel activity"/>
    <property type="evidence" value="ECO:0000304"/>
    <property type="project" value="Reactome"/>
</dbReference>
<dbReference type="GO" id="GO:0005244">
    <property type="term" value="F:voltage-gated monoatomic ion channel activity"/>
    <property type="evidence" value="ECO:0000250"/>
    <property type="project" value="UniProtKB"/>
</dbReference>
<dbReference type="GO" id="GO:0098662">
    <property type="term" value="P:inorganic cation transmembrane transport"/>
    <property type="evidence" value="ECO:0000250"/>
    <property type="project" value="UniProtKB"/>
</dbReference>
<dbReference type="FunFam" id="1.10.287.70:FF:000557">
    <property type="entry name" value="Voltage-dependent calcium channel type A subunit alpha-1-like Protein"/>
    <property type="match status" value="1"/>
</dbReference>
<dbReference type="FunFam" id="1.10.287.70:FF:000014">
    <property type="entry name" value="Voltage-dependent T-type calcium channel subunit alpha"/>
    <property type="match status" value="1"/>
</dbReference>
<dbReference type="FunFam" id="1.10.287.70:FF:000018">
    <property type="entry name" value="Voltage-dependent T-type calcium channel subunit alpha"/>
    <property type="match status" value="1"/>
</dbReference>
<dbReference type="FunFam" id="1.10.287.70:FF:000053">
    <property type="entry name" value="Voltage-dependent T-type calcium channel subunit alpha"/>
    <property type="match status" value="1"/>
</dbReference>
<dbReference type="FunFam" id="1.10.287.70:FF:000054">
    <property type="entry name" value="Voltage-dependent T-type calcium channel subunit alpha"/>
    <property type="match status" value="1"/>
</dbReference>
<dbReference type="FunFam" id="1.20.120.350:FF:000007">
    <property type="entry name" value="Voltage-dependent T-type calcium channel subunit alpha"/>
    <property type="match status" value="1"/>
</dbReference>
<dbReference type="FunFam" id="1.20.120.350:FF:000008">
    <property type="entry name" value="Voltage-dependent T-type calcium channel subunit alpha"/>
    <property type="match status" value="1"/>
</dbReference>
<dbReference type="FunFam" id="1.20.120.350:FF:000009">
    <property type="entry name" value="Voltage-dependent T-type calcium channel subunit alpha"/>
    <property type="match status" value="1"/>
</dbReference>
<dbReference type="FunFam" id="1.20.120.350:FF:000012">
    <property type="entry name" value="Voltage-dependent T-type calcium channel subunit alpha"/>
    <property type="match status" value="1"/>
</dbReference>
<dbReference type="Gene3D" id="1.10.287.70">
    <property type="match status" value="4"/>
</dbReference>
<dbReference type="Gene3D" id="1.20.120.350">
    <property type="entry name" value="Voltage-gated potassium channels. Chain C"/>
    <property type="match status" value="4"/>
</dbReference>
<dbReference type="InterPro" id="IPR005821">
    <property type="entry name" value="Ion_trans_dom"/>
</dbReference>
<dbReference type="InterPro" id="IPR050599">
    <property type="entry name" value="VDCC_alpha-1_subunit"/>
</dbReference>
<dbReference type="InterPro" id="IPR005445">
    <property type="entry name" value="VDCC_T_a1"/>
</dbReference>
<dbReference type="InterPro" id="IPR027359">
    <property type="entry name" value="Volt_channel_dom_sf"/>
</dbReference>
<dbReference type="PANTHER" id="PTHR45628">
    <property type="entry name" value="VOLTAGE-DEPENDENT CALCIUM CHANNEL TYPE A SUBUNIT ALPHA-1"/>
    <property type="match status" value="1"/>
</dbReference>
<dbReference type="PANTHER" id="PTHR45628:SF37">
    <property type="entry name" value="VOLTAGE-DEPENDENT T-TYPE CALCIUM CHANNEL SUBUNIT ALPHA-1H"/>
    <property type="match status" value="1"/>
</dbReference>
<dbReference type="Pfam" id="PF00520">
    <property type="entry name" value="Ion_trans"/>
    <property type="match status" value="4"/>
</dbReference>
<dbReference type="PRINTS" id="PR01629">
    <property type="entry name" value="TVDCCALPHA1"/>
</dbReference>
<dbReference type="SUPFAM" id="SSF81324">
    <property type="entry name" value="Voltage-gated potassium channels"/>
    <property type="match status" value="4"/>
</dbReference>